<evidence type="ECO:0000255" key="1"/>
<evidence type="ECO:0000305" key="2"/>
<sequence length="39" mass="4090">MGFYSGYSGGYSGGGYGSSFVLIVVLFILLIIVGATFLY</sequence>
<gene>
    <name type="primary">yosA</name>
    <name type="ordered locus">BSU20190</name>
</gene>
<organism>
    <name type="scientific">Bacillus subtilis (strain 168)</name>
    <dbReference type="NCBI Taxonomy" id="224308"/>
    <lineage>
        <taxon>Bacteria</taxon>
        <taxon>Bacillati</taxon>
        <taxon>Bacillota</taxon>
        <taxon>Bacilli</taxon>
        <taxon>Bacillales</taxon>
        <taxon>Bacillaceae</taxon>
        <taxon>Bacillus</taxon>
    </lineage>
</organism>
<protein>
    <recommendedName>
        <fullName evidence="2">SPbeta prophage-derived membrane protein YosA</fullName>
    </recommendedName>
</protein>
<proteinExistence type="inferred from homology"/>
<dbReference type="EMBL" id="AL009126">
    <property type="protein sequence ID" value="CAB13911.1"/>
    <property type="molecule type" value="Genomic_DNA"/>
</dbReference>
<dbReference type="RefSeq" id="NP_389901.1">
    <property type="nucleotide sequence ID" value="NC_000964.3"/>
</dbReference>
<dbReference type="RefSeq" id="WP_004399362.1">
    <property type="nucleotide sequence ID" value="NZ_OZ025638.1"/>
</dbReference>
<dbReference type="FunCoup" id="O31888">
    <property type="interactions" value="43"/>
</dbReference>
<dbReference type="EnsemblBacteria" id="CAB13911">
    <property type="protein sequence ID" value="CAB13911"/>
    <property type="gene ID" value="BSU_20190"/>
</dbReference>
<dbReference type="GeneID" id="939574"/>
<dbReference type="KEGG" id="bsu:BSU20190"/>
<dbReference type="PATRIC" id="fig|224308.179.peg.2209"/>
<dbReference type="InParanoid" id="O31888"/>
<dbReference type="BioCyc" id="BSUB:BSU20190-MONOMER"/>
<dbReference type="Proteomes" id="UP000001570">
    <property type="component" value="Chromosome"/>
</dbReference>
<dbReference type="GO" id="GO:0016020">
    <property type="term" value="C:membrane"/>
    <property type="evidence" value="ECO:0007669"/>
    <property type="project" value="UniProtKB-SubCell"/>
</dbReference>
<dbReference type="InterPro" id="IPR010070">
    <property type="entry name" value="YjcZ-like"/>
</dbReference>
<dbReference type="NCBIfam" id="TIGR01732">
    <property type="entry name" value="tiny_TM_bacill"/>
    <property type="match status" value="1"/>
</dbReference>
<dbReference type="Pfam" id="PF09680">
    <property type="entry name" value="YjcZ_2"/>
    <property type="match status" value="1"/>
</dbReference>
<comment type="subcellular location">
    <subcellularLocation>
        <location evidence="1">Membrane</location>
        <topology evidence="1">Single-pass membrane protein</topology>
    </subcellularLocation>
</comment>
<comment type="similarity">
    <text evidence="2">Belongs to the SscA family.</text>
</comment>
<reference key="1">
    <citation type="journal article" date="1997" name="Nature">
        <title>The complete genome sequence of the Gram-positive bacterium Bacillus subtilis.</title>
        <authorList>
            <person name="Kunst F."/>
            <person name="Ogasawara N."/>
            <person name="Moszer I."/>
            <person name="Albertini A.M."/>
            <person name="Alloni G."/>
            <person name="Azevedo V."/>
            <person name="Bertero M.G."/>
            <person name="Bessieres P."/>
            <person name="Bolotin A."/>
            <person name="Borchert S."/>
            <person name="Borriss R."/>
            <person name="Boursier L."/>
            <person name="Brans A."/>
            <person name="Braun M."/>
            <person name="Brignell S.C."/>
            <person name="Bron S."/>
            <person name="Brouillet S."/>
            <person name="Bruschi C.V."/>
            <person name="Caldwell B."/>
            <person name="Capuano V."/>
            <person name="Carter N.M."/>
            <person name="Choi S.-K."/>
            <person name="Codani J.-J."/>
            <person name="Connerton I.F."/>
            <person name="Cummings N.J."/>
            <person name="Daniel R.A."/>
            <person name="Denizot F."/>
            <person name="Devine K.M."/>
            <person name="Duesterhoeft A."/>
            <person name="Ehrlich S.D."/>
            <person name="Emmerson P.T."/>
            <person name="Entian K.-D."/>
            <person name="Errington J."/>
            <person name="Fabret C."/>
            <person name="Ferrari E."/>
            <person name="Foulger D."/>
            <person name="Fritz C."/>
            <person name="Fujita M."/>
            <person name="Fujita Y."/>
            <person name="Fuma S."/>
            <person name="Galizzi A."/>
            <person name="Galleron N."/>
            <person name="Ghim S.-Y."/>
            <person name="Glaser P."/>
            <person name="Goffeau A."/>
            <person name="Golightly E.J."/>
            <person name="Grandi G."/>
            <person name="Guiseppi G."/>
            <person name="Guy B.J."/>
            <person name="Haga K."/>
            <person name="Haiech J."/>
            <person name="Harwood C.R."/>
            <person name="Henaut A."/>
            <person name="Hilbert H."/>
            <person name="Holsappel S."/>
            <person name="Hosono S."/>
            <person name="Hullo M.-F."/>
            <person name="Itaya M."/>
            <person name="Jones L.-M."/>
            <person name="Joris B."/>
            <person name="Karamata D."/>
            <person name="Kasahara Y."/>
            <person name="Klaerr-Blanchard M."/>
            <person name="Klein C."/>
            <person name="Kobayashi Y."/>
            <person name="Koetter P."/>
            <person name="Koningstein G."/>
            <person name="Krogh S."/>
            <person name="Kumano M."/>
            <person name="Kurita K."/>
            <person name="Lapidus A."/>
            <person name="Lardinois S."/>
            <person name="Lauber J."/>
            <person name="Lazarevic V."/>
            <person name="Lee S.-M."/>
            <person name="Levine A."/>
            <person name="Liu H."/>
            <person name="Masuda S."/>
            <person name="Mauel C."/>
            <person name="Medigue C."/>
            <person name="Medina N."/>
            <person name="Mellado R.P."/>
            <person name="Mizuno M."/>
            <person name="Moestl D."/>
            <person name="Nakai S."/>
            <person name="Noback M."/>
            <person name="Noone D."/>
            <person name="O'Reilly M."/>
            <person name="Ogawa K."/>
            <person name="Ogiwara A."/>
            <person name="Oudega B."/>
            <person name="Park S.-H."/>
            <person name="Parro V."/>
            <person name="Pohl T.M."/>
            <person name="Portetelle D."/>
            <person name="Porwollik S."/>
            <person name="Prescott A.M."/>
            <person name="Presecan E."/>
            <person name="Pujic P."/>
            <person name="Purnelle B."/>
            <person name="Rapoport G."/>
            <person name="Rey M."/>
            <person name="Reynolds S."/>
            <person name="Rieger M."/>
            <person name="Rivolta C."/>
            <person name="Rocha E."/>
            <person name="Roche B."/>
            <person name="Rose M."/>
            <person name="Sadaie Y."/>
            <person name="Sato T."/>
            <person name="Scanlan E."/>
            <person name="Schleich S."/>
            <person name="Schroeter R."/>
            <person name="Scoffone F."/>
            <person name="Sekiguchi J."/>
            <person name="Sekowska A."/>
            <person name="Seror S.J."/>
            <person name="Serror P."/>
            <person name="Shin B.-S."/>
            <person name="Soldo B."/>
            <person name="Sorokin A."/>
            <person name="Tacconi E."/>
            <person name="Takagi T."/>
            <person name="Takahashi H."/>
            <person name="Takemaru K."/>
            <person name="Takeuchi M."/>
            <person name="Tamakoshi A."/>
            <person name="Tanaka T."/>
            <person name="Terpstra P."/>
            <person name="Tognoni A."/>
            <person name="Tosato V."/>
            <person name="Uchiyama S."/>
            <person name="Vandenbol M."/>
            <person name="Vannier F."/>
            <person name="Vassarotti A."/>
            <person name="Viari A."/>
            <person name="Wambutt R."/>
            <person name="Wedler E."/>
            <person name="Wedler H."/>
            <person name="Weitzenegger T."/>
            <person name="Winters P."/>
            <person name="Wipat A."/>
            <person name="Yamamoto H."/>
            <person name="Yamane K."/>
            <person name="Yasumoto K."/>
            <person name="Yata K."/>
            <person name="Yoshida K."/>
            <person name="Yoshikawa H.-F."/>
            <person name="Zumstein E."/>
            <person name="Yoshikawa H."/>
            <person name="Danchin A."/>
        </authorList>
    </citation>
    <scope>NUCLEOTIDE SEQUENCE [LARGE SCALE GENOMIC DNA]</scope>
    <source>
        <strain>168</strain>
    </source>
</reference>
<name>YOSA_BACSU</name>
<keyword id="KW-0472">Membrane</keyword>
<keyword id="KW-1185">Reference proteome</keyword>
<keyword id="KW-0812">Transmembrane</keyword>
<keyword id="KW-1133">Transmembrane helix</keyword>
<accession>O31888</accession>
<feature type="chain" id="PRO_0000384384" description="SPbeta prophage-derived membrane protein YosA">
    <location>
        <begin position="1"/>
        <end position="39"/>
    </location>
</feature>
<feature type="transmembrane region" description="Helical" evidence="1">
    <location>
        <begin position="19"/>
        <end position="39"/>
    </location>
</feature>